<proteinExistence type="inferred from homology"/>
<keyword id="KW-0249">Electron transport</keyword>
<keyword id="KW-0349">Heme</keyword>
<keyword id="KW-0408">Iron</keyword>
<keyword id="KW-0472">Membrane</keyword>
<keyword id="KW-0479">Metal-binding</keyword>
<keyword id="KW-0602">Photosynthesis</keyword>
<keyword id="KW-0604">Photosystem II</keyword>
<keyword id="KW-0793">Thylakoid</keyword>
<keyword id="KW-0812">Transmembrane</keyword>
<keyword id="KW-1133">Transmembrane helix</keyword>
<keyword id="KW-0813">Transport</keyword>
<evidence type="ECO:0000255" key="1">
    <source>
        <dbReference type="HAMAP-Rule" id="MF_00642"/>
    </source>
</evidence>
<name>PSBE_SYNSC</name>
<organism>
    <name type="scientific">Synechococcus sp. (strain CC9605)</name>
    <dbReference type="NCBI Taxonomy" id="110662"/>
    <lineage>
        <taxon>Bacteria</taxon>
        <taxon>Bacillati</taxon>
        <taxon>Cyanobacteriota</taxon>
        <taxon>Cyanophyceae</taxon>
        <taxon>Synechococcales</taxon>
        <taxon>Synechococcaceae</taxon>
        <taxon>Synechococcus</taxon>
    </lineage>
</organism>
<protein>
    <recommendedName>
        <fullName evidence="1">Cytochrome b559 subunit alpha</fullName>
    </recommendedName>
    <alternativeName>
        <fullName evidence="1">PSII reaction center subunit V</fullName>
    </alternativeName>
</protein>
<dbReference type="EMBL" id="CP000110">
    <property type="protein sequence ID" value="ABB33976.1"/>
    <property type="molecule type" value="Genomic_DNA"/>
</dbReference>
<dbReference type="RefSeq" id="WP_006850675.1">
    <property type="nucleotide sequence ID" value="NC_007516.1"/>
</dbReference>
<dbReference type="SMR" id="Q3AN56"/>
<dbReference type="STRING" id="110662.Syncc9605_0200"/>
<dbReference type="KEGG" id="syd:Syncc9605_0200"/>
<dbReference type="eggNOG" id="ENOG5032GCS">
    <property type="taxonomic scope" value="Bacteria"/>
</dbReference>
<dbReference type="HOGENOM" id="CLU_194095_0_0_3"/>
<dbReference type="OrthoDB" id="514620at2"/>
<dbReference type="GO" id="GO:0009523">
    <property type="term" value="C:photosystem II"/>
    <property type="evidence" value="ECO:0007669"/>
    <property type="project" value="UniProtKB-KW"/>
</dbReference>
<dbReference type="GO" id="GO:0031676">
    <property type="term" value="C:plasma membrane-derived thylakoid membrane"/>
    <property type="evidence" value="ECO:0007669"/>
    <property type="project" value="UniProtKB-SubCell"/>
</dbReference>
<dbReference type="GO" id="GO:0009055">
    <property type="term" value="F:electron transfer activity"/>
    <property type="evidence" value="ECO:0007669"/>
    <property type="project" value="UniProtKB-UniRule"/>
</dbReference>
<dbReference type="GO" id="GO:0020037">
    <property type="term" value="F:heme binding"/>
    <property type="evidence" value="ECO:0007669"/>
    <property type="project" value="InterPro"/>
</dbReference>
<dbReference type="GO" id="GO:0005506">
    <property type="term" value="F:iron ion binding"/>
    <property type="evidence" value="ECO:0007669"/>
    <property type="project" value="UniProtKB-UniRule"/>
</dbReference>
<dbReference type="GO" id="GO:0009767">
    <property type="term" value="P:photosynthetic electron transport chain"/>
    <property type="evidence" value="ECO:0007669"/>
    <property type="project" value="InterPro"/>
</dbReference>
<dbReference type="Gene3D" id="1.20.5.860">
    <property type="entry name" value="Photosystem II cytochrome b559, alpha subunit"/>
    <property type="match status" value="1"/>
</dbReference>
<dbReference type="HAMAP" id="MF_00642">
    <property type="entry name" value="PSII_PsbE"/>
    <property type="match status" value="1"/>
</dbReference>
<dbReference type="InterPro" id="IPR006217">
    <property type="entry name" value="PSII_cyt_b559_asu"/>
</dbReference>
<dbReference type="InterPro" id="IPR037025">
    <property type="entry name" value="PSII_cyt_b559_asu_sf"/>
</dbReference>
<dbReference type="InterPro" id="IPR013081">
    <property type="entry name" value="PSII_cyt_b559_N"/>
</dbReference>
<dbReference type="InterPro" id="IPR013082">
    <property type="entry name" value="PSII_cytb559_asu_lum"/>
</dbReference>
<dbReference type="NCBIfam" id="TIGR01332">
    <property type="entry name" value="cyt_b559_alpha"/>
    <property type="match status" value="1"/>
</dbReference>
<dbReference type="PANTHER" id="PTHR33391">
    <property type="entry name" value="CYTOCHROME B559 SUBUNIT BETA-RELATED"/>
    <property type="match status" value="1"/>
</dbReference>
<dbReference type="PANTHER" id="PTHR33391:SF9">
    <property type="entry name" value="CYTOCHROME B559 SUBUNIT BETA-RELATED"/>
    <property type="match status" value="1"/>
</dbReference>
<dbReference type="Pfam" id="PF00283">
    <property type="entry name" value="Cytochrom_B559"/>
    <property type="match status" value="1"/>
</dbReference>
<dbReference type="Pfam" id="PF00284">
    <property type="entry name" value="Cytochrom_B559a"/>
    <property type="match status" value="1"/>
</dbReference>
<dbReference type="PIRSF" id="PIRSF000036">
    <property type="entry name" value="PsbE"/>
    <property type="match status" value="1"/>
</dbReference>
<dbReference type="SUPFAM" id="SSF161045">
    <property type="entry name" value="Cytochrome b559 subunits"/>
    <property type="match status" value="1"/>
</dbReference>
<gene>
    <name evidence="1" type="primary">psbE</name>
    <name type="ordered locus">Syncc9605_0200</name>
</gene>
<comment type="function">
    <text evidence="1">This b-type cytochrome is tightly associated with the reaction center of photosystem II (PSII). PSII is a light-driven water:plastoquinone oxidoreductase that uses light energy to abstract electrons from H(2)O, generating O(2) and a proton gradient subsequently used for ATP formation. It consists of a core antenna complex that captures photons, and an electron transfer chain that converts photonic excitation into a charge separation.</text>
</comment>
<comment type="cofactor">
    <cofactor evidence="1">
        <name>heme b</name>
        <dbReference type="ChEBI" id="CHEBI:60344"/>
    </cofactor>
    <text evidence="1">With its partner (PsbF) binds heme. PSII binds additional chlorophylls, carotenoids and specific lipids.</text>
</comment>
<comment type="subunit">
    <text evidence="1">Heterodimer of an alpha subunit and a beta subunit. PSII is composed of 1 copy each of membrane proteins PsbA, PsbB, PsbC, PsbD, PsbE, PsbF, PsbH, PsbI, PsbJ, PsbK, PsbL, PsbM, PsbT, PsbX, PsbY, PsbZ, Psb30/Ycf12, peripheral proteins PsbO, CyanoQ (PsbQ), PsbU, PsbV and a large number of cofactors. It forms dimeric complexes.</text>
</comment>
<comment type="subcellular location">
    <subcellularLocation>
        <location evidence="1">Cellular thylakoid membrane</location>
        <topology evidence="1">Single-pass membrane protein</topology>
    </subcellularLocation>
</comment>
<comment type="similarity">
    <text evidence="1">Belongs to the PsbE/PsbF family.</text>
</comment>
<accession>Q3AN56</accession>
<reference key="1">
    <citation type="submission" date="2005-07" db="EMBL/GenBank/DDBJ databases">
        <title>Complete sequence of Synechococcus sp. CC9605.</title>
        <authorList>
            <consortium name="US DOE Joint Genome Institute"/>
            <person name="Copeland A."/>
            <person name="Lucas S."/>
            <person name="Lapidus A."/>
            <person name="Barry K."/>
            <person name="Detter J.C."/>
            <person name="Glavina T."/>
            <person name="Hammon N."/>
            <person name="Israni S."/>
            <person name="Pitluck S."/>
            <person name="Schmutz J."/>
            <person name="Martinez M."/>
            <person name="Larimer F."/>
            <person name="Land M."/>
            <person name="Kyrpides N."/>
            <person name="Ivanova N."/>
            <person name="Richardson P."/>
        </authorList>
    </citation>
    <scope>NUCLEOTIDE SEQUENCE [LARGE SCALE GENOMIC DNA]</scope>
    <source>
        <strain>CC9605</strain>
    </source>
</reference>
<sequence length="82" mass="9091">MAAGSTGERPFFEIITSIRYWVIHAVTLPSIFLAGFLFVSTGLAYDAFGTPRPDAYFQASESKAPVVSQRYEGKSELDIRLK</sequence>
<feature type="chain" id="PRO_0000233226" description="Cytochrome b559 subunit alpha">
    <location>
        <begin position="1"/>
        <end position="82"/>
    </location>
</feature>
<feature type="transmembrane region" description="Helical" evidence="1">
    <location>
        <begin position="22"/>
        <end position="36"/>
    </location>
</feature>
<feature type="binding site" description="axial binding residue" evidence="1">
    <location>
        <position position="24"/>
    </location>
    <ligand>
        <name>heme</name>
        <dbReference type="ChEBI" id="CHEBI:30413"/>
        <note>ligand shared with beta subunit</note>
    </ligand>
    <ligandPart>
        <name>Fe</name>
        <dbReference type="ChEBI" id="CHEBI:18248"/>
    </ligandPart>
</feature>